<organism>
    <name type="scientific">Escherichia coli O17:K52:H18 (strain UMN026 / ExPEC)</name>
    <dbReference type="NCBI Taxonomy" id="585056"/>
    <lineage>
        <taxon>Bacteria</taxon>
        <taxon>Pseudomonadati</taxon>
        <taxon>Pseudomonadota</taxon>
        <taxon>Gammaproteobacteria</taxon>
        <taxon>Enterobacterales</taxon>
        <taxon>Enterobacteriaceae</taxon>
        <taxon>Escherichia</taxon>
    </lineage>
</organism>
<reference key="1">
    <citation type="journal article" date="2009" name="PLoS Genet.">
        <title>Organised genome dynamics in the Escherichia coli species results in highly diverse adaptive paths.</title>
        <authorList>
            <person name="Touchon M."/>
            <person name="Hoede C."/>
            <person name="Tenaillon O."/>
            <person name="Barbe V."/>
            <person name="Baeriswyl S."/>
            <person name="Bidet P."/>
            <person name="Bingen E."/>
            <person name="Bonacorsi S."/>
            <person name="Bouchier C."/>
            <person name="Bouvet O."/>
            <person name="Calteau A."/>
            <person name="Chiapello H."/>
            <person name="Clermont O."/>
            <person name="Cruveiller S."/>
            <person name="Danchin A."/>
            <person name="Diard M."/>
            <person name="Dossat C."/>
            <person name="Karoui M.E."/>
            <person name="Frapy E."/>
            <person name="Garry L."/>
            <person name="Ghigo J.M."/>
            <person name="Gilles A.M."/>
            <person name="Johnson J."/>
            <person name="Le Bouguenec C."/>
            <person name="Lescat M."/>
            <person name="Mangenot S."/>
            <person name="Martinez-Jehanne V."/>
            <person name="Matic I."/>
            <person name="Nassif X."/>
            <person name="Oztas S."/>
            <person name="Petit M.A."/>
            <person name="Pichon C."/>
            <person name="Rouy Z."/>
            <person name="Ruf C.S."/>
            <person name="Schneider D."/>
            <person name="Tourret J."/>
            <person name="Vacherie B."/>
            <person name="Vallenet D."/>
            <person name="Medigue C."/>
            <person name="Rocha E.P.C."/>
            <person name="Denamur E."/>
        </authorList>
    </citation>
    <scope>NUCLEOTIDE SEQUENCE [LARGE SCALE GENOMIC DNA]</scope>
    <source>
        <strain>UMN026 / ExPEC</strain>
    </source>
</reference>
<evidence type="ECO:0000255" key="1">
    <source>
        <dbReference type="HAMAP-Rule" id="MF_01030"/>
    </source>
</evidence>
<feature type="chain" id="PRO_1000197939" description="D-serine dehydratase">
    <location>
        <begin position="1"/>
        <end position="443"/>
    </location>
</feature>
<feature type="modified residue" description="N6-(pyridoxal phosphate)lysine" evidence="1">
    <location>
        <position position="118"/>
    </location>
</feature>
<keyword id="KW-0456">Lyase</keyword>
<keyword id="KW-0663">Pyridoxal phosphate</keyword>
<accession>B7N5W6</accession>
<proteinExistence type="inferred from homology"/>
<name>SDHD_ECOLU</name>
<sequence length="443" mass="47988">MENAKMNSLIAQYPLVKDLVALQETTWFNPGTTSLAEGLPYVGLTEQDVQDAHARLSRFAPYLAKAFPETAATGGIIESELVAIPAMQKRLEKEYQQPISGQLLLKKDSHLPISGSIKARGGIYEVLAHAEKLALEAGLLTLEDDYSKLLSPEFKQFFSQYSIAVGSTGNLGLSIGIMSARIGFKVTVHMSADARAWKKAKLRSHGVTVVEYEQDYGVAVEEGRKAAQSDPNCFFIDDENSRTLFLGYSVAGQRLKAQFAEQGRIVDADNPLFVYLPCGVGGGPGGVAFGLKLAFGDHVHCFFAEPTHSPCMLLGVHTGLHDQISVQDIGIDNLTAADGLAVGRASGFVGRAMERLLDGFYTLSDQTMYDMLGWLAQEEGIRLEPSALAGMAGPQRVCASVSYQQMHGFSAEQLRNATHLVWATGGGMVPEEEMEQYLAKGRS</sequence>
<dbReference type="EC" id="4.3.1.18" evidence="1"/>
<dbReference type="EMBL" id="CU928163">
    <property type="protein sequence ID" value="CAR13875.1"/>
    <property type="molecule type" value="Genomic_DNA"/>
</dbReference>
<dbReference type="RefSeq" id="WP_000426461.1">
    <property type="nucleotide sequence ID" value="NC_011751.1"/>
</dbReference>
<dbReference type="RefSeq" id="YP_002413402.1">
    <property type="nucleotide sequence ID" value="NC_011751.1"/>
</dbReference>
<dbReference type="SMR" id="B7N5W6"/>
<dbReference type="STRING" id="585056.ECUMN_2695"/>
<dbReference type="KEGG" id="eum:ECUMN_2695"/>
<dbReference type="PATRIC" id="fig|585056.7.peg.2877"/>
<dbReference type="HOGENOM" id="CLU_035707_0_0_6"/>
<dbReference type="Proteomes" id="UP000007097">
    <property type="component" value="Chromosome"/>
</dbReference>
<dbReference type="GO" id="GO:0008721">
    <property type="term" value="F:D-serine ammonia-lyase activity"/>
    <property type="evidence" value="ECO:0007669"/>
    <property type="project" value="UniProtKB-EC"/>
</dbReference>
<dbReference type="GO" id="GO:0016836">
    <property type="term" value="F:hydro-lyase activity"/>
    <property type="evidence" value="ECO:0007669"/>
    <property type="project" value="UniProtKB-UniRule"/>
</dbReference>
<dbReference type="GO" id="GO:0030170">
    <property type="term" value="F:pyridoxal phosphate binding"/>
    <property type="evidence" value="ECO:0007669"/>
    <property type="project" value="InterPro"/>
</dbReference>
<dbReference type="GO" id="GO:0036088">
    <property type="term" value="P:D-serine catabolic process"/>
    <property type="evidence" value="ECO:0007669"/>
    <property type="project" value="TreeGrafter"/>
</dbReference>
<dbReference type="GO" id="GO:0009097">
    <property type="term" value="P:isoleucine biosynthetic process"/>
    <property type="evidence" value="ECO:0007669"/>
    <property type="project" value="TreeGrafter"/>
</dbReference>
<dbReference type="CDD" id="cd06447">
    <property type="entry name" value="D-Ser-dehyd"/>
    <property type="match status" value="1"/>
</dbReference>
<dbReference type="FunFam" id="3.40.50.1100:FF:000018">
    <property type="entry name" value="D-serine dehydratase"/>
    <property type="match status" value="1"/>
</dbReference>
<dbReference type="Gene3D" id="3.40.50.1100">
    <property type="match status" value="2"/>
</dbReference>
<dbReference type="HAMAP" id="MF_01030">
    <property type="entry name" value="D_Ser_dehydrat"/>
    <property type="match status" value="1"/>
</dbReference>
<dbReference type="InterPro" id="IPR011780">
    <property type="entry name" value="D_Ser_am_lyase"/>
</dbReference>
<dbReference type="InterPro" id="IPR050147">
    <property type="entry name" value="Ser/Thr_Dehydratase"/>
</dbReference>
<dbReference type="InterPro" id="IPR000634">
    <property type="entry name" value="Ser/Thr_deHydtase_PyrdxlP-BS"/>
</dbReference>
<dbReference type="InterPro" id="IPR001926">
    <property type="entry name" value="TrpB-like_PALP"/>
</dbReference>
<dbReference type="InterPro" id="IPR036052">
    <property type="entry name" value="TrpB-like_PALP_sf"/>
</dbReference>
<dbReference type="NCBIfam" id="TIGR02035">
    <property type="entry name" value="D_Ser_am_lyase"/>
    <property type="match status" value="1"/>
</dbReference>
<dbReference type="NCBIfam" id="NF002823">
    <property type="entry name" value="PRK02991.1"/>
    <property type="match status" value="1"/>
</dbReference>
<dbReference type="PANTHER" id="PTHR48078:SF9">
    <property type="entry name" value="D-SERINE DEHYDRATASE"/>
    <property type="match status" value="1"/>
</dbReference>
<dbReference type="PANTHER" id="PTHR48078">
    <property type="entry name" value="THREONINE DEHYDRATASE, MITOCHONDRIAL-RELATED"/>
    <property type="match status" value="1"/>
</dbReference>
<dbReference type="Pfam" id="PF00291">
    <property type="entry name" value="PALP"/>
    <property type="match status" value="1"/>
</dbReference>
<dbReference type="SUPFAM" id="SSF53686">
    <property type="entry name" value="Tryptophan synthase beta subunit-like PLP-dependent enzymes"/>
    <property type="match status" value="1"/>
</dbReference>
<dbReference type="PROSITE" id="PS00165">
    <property type="entry name" value="DEHYDRATASE_SER_THR"/>
    <property type="match status" value="1"/>
</dbReference>
<protein>
    <recommendedName>
        <fullName evidence="1">D-serine dehydratase</fullName>
        <ecNumber evidence="1">4.3.1.18</ecNumber>
    </recommendedName>
    <alternativeName>
        <fullName evidence="1">D-serine deaminase</fullName>
        <shortName evidence="1">DSD</shortName>
    </alternativeName>
</protein>
<comment type="catalytic activity">
    <reaction evidence="1">
        <text>D-serine = pyruvate + NH4(+)</text>
        <dbReference type="Rhea" id="RHEA:13977"/>
        <dbReference type="ChEBI" id="CHEBI:15361"/>
        <dbReference type="ChEBI" id="CHEBI:28938"/>
        <dbReference type="ChEBI" id="CHEBI:35247"/>
        <dbReference type="EC" id="4.3.1.18"/>
    </reaction>
</comment>
<comment type="cofactor">
    <cofactor evidence="1">
        <name>pyridoxal 5'-phosphate</name>
        <dbReference type="ChEBI" id="CHEBI:597326"/>
    </cofactor>
</comment>
<comment type="subunit">
    <text evidence="1">Monomer.</text>
</comment>
<comment type="similarity">
    <text evidence="1">Belongs to the serine/threonine dehydratase family. DsdA subfamily.</text>
</comment>
<gene>
    <name evidence="1" type="primary">dsdA</name>
    <name type="ordered locus">ECUMN_2695</name>
</gene>